<dbReference type="GO" id="GO:0005576">
    <property type="term" value="C:extracellular region"/>
    <property type="evidence" value="ECO:0007669"/>
    <property type="project" value="UniProtKB-SubCell"/>
</dbReference>
<dbReference type="GO" id="GO:0042742">
    <property type="term" value="P:defense response to bacterium"/>
    <property type="evidence" value="ECO:0007669"/>
    <property type="project" value="UniProtKB-KW"/>
</dbReference>
<dbReference type="GO" id="GO:0050832">
    <property type="term" value="P:defense response to fungus"/>
    <property type="evidence" value="ECO:0007669"/>
    <property type="project" value="UniProtKB-KW"/>
</dbReference>
<dbReference type="GO" id="GO:0031640">
    <property type="term" value="P:killing of cells of another organism"/>
    <property type="evidence" value="ECO:0007669"/>
    <property type="project" value="UniProtKB-KW"/>
</dbReference>
<dbReference type="InterPro" id="IPR012520">
    <property type="entry name" value="Antimicrobial_frog_1"/>
</dbReference>
<dbReference type="Pfam" id="PF08018">
    <property type="entry name" value="Antimicrobial_1"/>
    <property type="match status" value="1"/>
</dbReference>
<evidence type="ECO:0000250" key="1"/>
<evidence type="ECO:0000269" key="2">
    <source>
    </source>
</evidence>
<evidence type="ECO:0000305" key="3"/>
<sequence length="24" mass="2585">FLPIIASVAAKVFSKIFCAISKKC</sequence>
<comment type="function">
    <text evidence="2">Antibacterial activity against Gram-positive bacterium S.aureus and Gram-negative bacterium E.coli. Has activity against C.albicans.</text>
</comment>
<comment type="subcellular location">
    <subcellularLocation>
        <location>Secreted</location>
    </subcellularLocation>
</comment>
<comment type="tissue specificity">
    <text>Expressed by the skin glands.</text>
</comment>
<comment type="mass spectrometry" mass="2583.0" method="Electrospray" evidence="2"/>
<comment type="similarity">
    <text evidence="3">Belongs to the frog skin active peptide (FSAP) family. Brevinin subfamily.</text>
</comment>
<name>BR1C_LITPI</name>
<reference key="1">
    <citation type="journal article" date="2000" name="Eur. J. Biochem.">
        <title>Peptides with antimicrobial activity from four different families isolated from the skins of the North American frogs Rana luteiventris, Rana berlandieri and Rana pipiens.</title>
        <authorList>
            <person name="Goraya J."/>
            <person name="Wang Y."/>
            <person name="Li Z."/>
            <person name="O'Flaherty M."/>
            <person name="Knoop F.C."/>
            <person name="Platz J.E."/>
            <person name="Conlon J.M."/>
        </authorList>
    </citation>
    <scope>PROTEIN SEQUENCE</scope>
    <scope>FUNCTION</scope>
    <scope>MASS SPECTROMETRY</scope>
    <source>
        <tissue>Skin secretion</tissue>
    </source>
</reference>
<feature type="peptide" id="PRO_0000043543" description="Brevinin-1Pc">
    <location>
        <begin position="1"/>
        <end position="24"/>
    </location>
</feature>
<feature type="disulfide bond" evidence="1">
    <location>
        <begin position="18"/>
        <end position="24"/>
    </location>
</feature>
<protein>
    <recommendedName>
        <fullName>Brevinin-1Pc</fullName>
    </recommendedName>
</protein>
<organism>
    <name type="scientific">Lithobates pipiens</name>
    <name type="common">Northern leopard frog</name>
    <name type="synonym">Rana pipiens</name>
    <dbReference type="NCBI Taxonomy" id="8404"/>
    <lineage>
        <taxon>Eukaryota</taxon>
        <taxon>Metazoa</taxon>
        <taxon>Chordata</taxon>
        <taxon>Craniata</taxon>
        <taxon>Vertebrata</taxon>
        <taxon>Euteleostomi</taxon>
        <taxon>Amphibia</taxon>
        <taxon>Batrachia</taxon>
        <taxon>Anura</taxon>
        <taxon>Neobatrachia</taxon>
        <taxon>Ranoidea</taxon>
        <taxon>Ranidae</taxon>
        <taxon>Lithobates</taxon>
    </lineage>
</organism>
<proteinExistence type="evidence at protein level"/>
<accession>P82843</accession>
<keyword id="KW-0878">Amphibian defense peptide</keyword>
<keyword id="KW-0044">Antibiotic</keyword>
<keyword id="KW-0929">Antimicrobial</keyword>
<keyword id="KW-0903">Direct protein sequencing</keyword>
<keyword id="KW-1015">Disulfide bond</keyword>
<keyword id="KW-0295">Fungicide</keyword>
<keyword id="KW-0964">Secreted</keyword>